<keyword id="KW-0963">Cytoplasm</keyword>
<keyword id="KW-0255">Endonuclease</keyword>
<keyword id="KW-0378">Hydrolase</keyword>
<keyword id="KW-0460">Magnesium</keyword>
<keyword id="KW-0479">Metal-binding</keyword>
<keyword id="KW-0540">Nuclease</keyword>
<organism>
    <name type="scientific">Salmonella heidelberg (strain SL476)</name>
    <dbReference type="NCBI Taxonomy" id="454169"/>
    <lineage>
        <taxon>Bacteria</taxon>
        <taxon>Pseudomonadati</taxon>
        <taxon>Pseudomonadota</taxon>
        <taxon>Gammaproteobacteria</taxon>
        <taxon>Enterobacterales</taxon>
        <taxon>Enterobacteriaceae</taxon>
        <taxon>Salmonella</taxon>
    </lineage>
</organism>
<feature type="chain" id="PRO_1000090915" description="Ribonuclease H">
    <location>
        <begin position="1"/>
        <end position="155"/>
    </location>
</feature>
<feature type="domain" description="RNase H type-1" evidence="2">
    <location>
        <begin position="1"/>
        <end position="142"/>
    </location>
</feature>
<feature type="binding site" evidence="1">
    <location>
        <position position="10"/>
    </location>
    <ligand>
        <name>Mg(2+)</name>
        <dbReference type="ChEBI" id="CHEBI:18420"/>
        <label>1</label>
    </ligand>
</feature>
<feature type="binding site" evidence="1">
    <location>
        <position position="10"/>
    </location>
    <ligand>
        <name>Mg(2+)</name>
        <dbReference type="ChEBI" id="CHEBI:18420"/>
        <label>2</label>
    </ligand>
</feature>
<feature type="binding site" evidence="1">
    <location>
        <position position="48"/>
    </location>
    <ligand>
        <name>Mg(2+)</name>
        <dbReference type="ChEBI" id="CHEBI:18420"/>
        <label>1</label>
    </ligand>
</feature>
<feature type="binding site" evidence="1">
    <location>
        <position position="70"/>
    </location>
    <ligand>
        <name>Mg(2+)</name>
        <dbReference type="ChEBI" id="CHEBI:18420"/>
        <label>1</label>
    </ligand>
</feature>
<feature type="binding site" evidence="1">
    <location>
        <position position="134"/>
    </location>
    <ligand>
        <name>Mg(2+)</name>
        <dbReference type="ChEBI" id="CHEBI:18420"/>
        <label>2</label>
    </ligand>
</feature>
<name>RNH_SALHS</name>
<reference key="1">
    <citation type="journal article" date="2011" name="J. Bacteriol.">
        <title>Comparative genomics of 28 Salmonella enterica isolates: evidence for CRISPR-mediated adaptive sublineage evolution.</title>
        <authorList>
            <person name="Fricke W.F."/>
            <person name="Mammel M.K."/>
            <person name="McDermott P.F."/>
            <person name="Tartera C."/>
            <person name="White D.G."/>
            <person name="Leclerc J.E."/>
            <person name="Ravel J."/>
            <person name="Cebula T.A."/>
        </authorList>
    </citation>
    <scope>NUCLEOTIDE SEQUENCE [LARGE SCALE GENOMIC DNA]</scope>
    <source>
        <strain>SL476</strain>
    </source>
</reference>
<dbReference type="EC" id="3.1.26.4" evidence="1"/>
<dbReference type="EMBL" id="CP001120">
    <property type="protein sequence ID" value="ACF66340.1"/>
    <property type="molecule type" value="Genomic_DNA"/>
</dbReference>
<dbReference type="RefSeq" id="WP_000917872.1">
    <property type="nucleotide sequence ID" value="NC_011083.1"/>
</dbReference>
<dbReference type="SMR" id="B4TK85"/>
<dbReference type="KEGG" id="seh:SeHA_C0301"/>
<dbReference type="HOGENOM" id="CLU_030894_6_0_6"/>
<dbReference type="Proteomes" id="UP000001866">
    <property type="component" value="Chromosome"/>
</dbReference>
<dbReference type="GO" id="GO:0005737">
    <property type="term" value="C:cytoplasm"/>
    <property type="evidence" value="ECO:0007669"/>
    <property type="project" value="UniProtKB-SubCell"/>
</dbReference>
<dbReference type="GO" id="GO:0000287">
    <property type="term" value="F:magnesium ion binding"/>
    <property type="evidence" value="ECO:0007669"/>
    <property type="project" value="UniProtKB-UniRule"/>
</dbReference>
<dbReference type="GO" id="GO:0003676">
    <property type="term" value="F:nucleic acid binding"/>
    <property type="evidence" value="ECO:0007669"/>
    <property type="project" value="InterPro"/>
</dbReference>
<dbReference type="GO" id="GO:0004523">
    <property type="term" value="F:RNA-DNA hybrid ribonuclease activity"/>
    <property type="evidence" value="ECO:0007669"/>
    <property type="project" value="UniProtKB-UniRule"/>
</dbReference>
<dbReference type="GO" id="GO:0043137">
    <property type="term" value="P:DNA replication, removal of RNA primer"/>
    <property type="evidence" value="ECO:0007669"/>
    <property type="project" value="TreeGrafter"/>
</dbReference>
<dbReference type="CDD" id="cd09278">
    <property type="entry name" value="RNase_HI_prokaryote_like"/>
    <property type="match status" value="1"/>
</dbReference>
<dbReference type="FunFam" id="3.30.420.10:FF:000008">
    <property type="entry name" value="Ribonuclease H"/>
    <property type="match status" value="1"/>
</dbReference>
<dbReference type="Gene3D" id="3.30.420.10">
    <property type="entry name" value="Ribonuclease H-like superfamily/Ribonuclease H"/>
    <property type="match status" value="1"/>
</dbReference>
<dbReference type="HAMAP" id="MF_00042">
    <property type="entry name" value="RNase_H"/>
    <property type="match status" value="1"/>
</dbReference>
<dbReference type="InterPro" id="IPR050092">
    <property type="entry name" value="RNase_H"/>
</dbReference>
<dbReference type="InterPro" id="IPR012337">
    <property type="entry name" value="RNaseH-like_sf"/>
</dbReference>
<dbReference type="InterPro" id="IPR002156">
    <property type="entry name" value="RNaseH_domain"/>
</dbReference>
<dbReference type="InterPro" id="IPR036397">
    <property type="entry name" value="RNaseH_sf"/>
</dbReference>
<dbReference type="InterPro" id="IPR022892">
    <property type="entry name" value="RNaseHI"/>
</dbReference>
<dbReference type="NCBIfam" id="NF001236">
    <property type="entry name" value="PRK00203.1"/>
    <property type="match status" value="1"/>
</dbReference>
<dbReference type="PANTHER" id="PTHR10642">
    <property type="entry name" value="RIBONUCLEASE H1"/>
    <property type="match status" value="1"/>
</dbReference>
<dbReference type="PANTHER" id="PTHR10642:SF26">
    <property type="entry name" value="RIBONUCLEASE H1"/>
    <property type="match status" value="1"/>
</dbReference>
<dbReference type="Pfam" id="PF00075">
    <property type="entry name" value="RNase_H"/>
    <property type="match status" value="1"/>
</dbReference>
<dbReference type="SUPFAM" id="SSF53098">
    <property type="entry name" value="Ribonuclease H-like"/>
    <property type="match status" value="1"/>
</dbReference>
<dbReference type="PROSITE" id="PS50879">
    <property type="entry name" value="RNASE_H_1"/>
    <property type="match status" value="1"/>
</dbReference>
<comment type="function">
    <text evidence="1">Endonuclease that specifically degrades the RNA of RNA-DNA hybrids.</text>
</comment>
<comment type="catalytic activity">
    <reaction evidence="1">
        <text>Endonucleolytic cleavage to 5'-phosphomonoester.</text>
        <dbReference type="EC" id="3.1.26.4"/>
    </reaction>
</comment>
<comment type="cofactor">
    <cofactor evidence="1">
        <name>Mg(2+)</name>
        <dbReference type="ChEBI" id="CHEBI:18420"/>
    </cofactor>
    <text evidence="1">Binds 1 Mg(2+) ion per subunit. May bind a second metal ion at a regulatory site, or after substrate binding.</text>
</comment>
<comment type="subunit">
    <text evidence="1">Monomer.</text>
</comment>
<comment type="subcellular location">
    <subcellularLocation>
        <location evidence="1">Cytoplasm</location>
    </subcellularLocation>
</comment>
<comment type="similarity">
    <text evidence="1">Belongs to the RNase H family.</text>
</comment>
<evidence type="ECO:0000255" key="1">
    <source>
        <dbReference type="HAMAP-Rule" id="MF_00042"/>
    </source>
</evidence>
<evidence type="ECO:0000255" key="2">
    <source>
        <dbReference type="PROSITE-ProRule" id="PRU00408"/>
    </source>
</evidence>
<sequence>MLKQVEIFTDGSCLGNPGPGGYGAILRYRGHEKTFSEGYTLTTNNRMELMAAIVALEALKEHCEVTLSTDSQYVRQGITQWIHNWKKRGWKTAEKKPVKNVDLWKRLDAALGQHQIKWVWVKGHAGHPENERCDELARAAAMNPTQEDSGYQAEA</sequence>
<protein>
    <recommendedName>
        <fullName evidence="1">Ribonuclease H</fullName>
        <shortName evidence="1">RNase H</shortName>
        <ecNumber evidence="1">3.1.26.4</ecNumber>
    </recommendedName>
</protein>
<proteinExistence type="inferred from homology"/>
<gene>
    <name evidence="1" type="primary">rnhA</name>
    <name type="ordered locus">SeHA_C0301</name>
</gene>
<accession>B4TK85</accession>